<dbReference type="EMBL" id="CP000468">
    <property type="protein sequence ID" value="ABJ03952.1"/>
    <property type="molecule type" value="Genomic_DNA"/>
</dbReference>
<dbReference type="RefSeq" id="WP_000068677.1">
    <property type="nucleotide sequence ID" value="NZ_CADILS010000013.1"/>
</dbReference>
<dbReference type="BMRB" id="A1AJW2"/>
<dbReference type="SMR" id="A1AJW2"/>
<dbReference type="GeneID" id="89519371"/>
<dbReference type="KEGG" id="ecv:APECO1_1986"/>
<dbReference type="HOGENOM" id="CLU_147939_0_0_6"/>
<dbReference type="Proteomes" id="UP000008216">
    <property type="component" value="Chromosome"/>
</dbReference>
<dbReference type="GO" id="GO:0005737">
    <property type="term" value="C:cytoplasm"/>
    <property type="evidence" value="ECO:0007669"/>
    <property type="project" value="UniProtKB-SubCell"/>
</dbReference>
<dbReference type="GO" id="GO:0003700">
    <property type="term" value="F:DNA-binding transcription factor activity"/>
    <property type="evidence" value="ECO:0007669"/>
    <property type="project" value="InterPro"/>
</dbReference>
<dbReference type="GO" id="GO:0043565">
    <property type="term" value="F:sequence-specific DNA binding"/>
    <property type="evidence" value="ECO:0007669"/>
    <property type="project" value="InterPro"/>
</dbReference>
<dbReference type="GO" id="GO:0045892">
    <property type="term" value="P:negative regulation of DNA-templated transcription"/>
    <property type="evidence" value="ECO:0007669"/>
    <property type="project" value="UniProtKB-UniRule"/>
</dbReference>
<dbReference type="FunFam" id="1.10.1270.10:FF:000001">
    <property type="entry name" value="Trp operon repressor"/>
    <property type="match status" value="1"/>
</dbReference>
<dbReference type="Gene3D" id="1.10.1270.10">
    <property type="entry name" value="TrpR-like"/>
    <property type="match status" value="1"/>
</dbReference>
<dbReference type="HAMAP" id="MF_00475">
    <property type="entry name" value="Trp_repressor"/>
    <property type="match status" value="1"/>
</dbReference>
<dbReference type="InterPro" id="IPR000831">
    <property type="entry name" value="Trp_repress"/>
</dbReference>
<dbReference type="InterPro" id="IPR013335">
    <property type="entry name" value="Trp_repress_bac"/>
</dbReference>
<dbReference type="InterPro" id="IPR010921">
    <property type="entry name" value="Trp_repressor/repl_initiator"/>
</dbReference>
<dbReference type="InterPro" id="IPR038116">
    <property type="entry name" value="TrpR-like_sf"/>
</dbReference>
<dbReference type="NCBIfam" id="TIGR01321">
    <property type="entry name" value="TrpR"/>
    <property type="match status" value="1"/>
</dbReference>
<dbReference type="PANTHER" id="PTHR38025">
    <property type="entry name" value="TRP OPERON REPRESSOR"/>
    <property type="match status" value="1"/>
</dbReference>
<dbReference type="PANTHER" id="PTHR38025:SF1">
    <property type="entry name" value="TRP OPERON REPRESSOR"/>
    <property type="match status" value="1"/>
</dbReference>
<dbReference type="Pfam" id="PF01371">
    <property type="entry name" value="Trp_repressor"/>
    <property type="match status" value="1"/>
</dbReference>
<dbReference type="PIRSF" id="PIRSF003196">
    <property type="entry name" value="Trp_repressor"/>
    <property type="match status" value="1"/>
</dbReference>
<dbReference type="SUPFAM" id="SSF48295">
    <property type="entry name" value="TrpR-like"/>
    <property type="match status" value="1"/>
</dbReference>
<accession>A1AJW2</accession>
<sequence length="108" mass="12341">MAQQSPYSAAMAEQRHQEWLRFVDLLKNAYQNDLHLPLLNLMLTPDEREALGTRVRIVEELLRGEMSQRELKNELGAGIATITRGSNSLKAAPVELRQWLEDVLLKSD</sequence>
<gene>
    <name evidence="1" type="primary">trpR</name>
    <name type="ordered locus">Ecok1_44580</name>
    <name type="ORF">APECO1_1986</name>
</gene>
<comment type="function">
    <text evidence="1">This protein is an aporepressor. When complexed with L-tryptophan it binds the operator region of the trp operon (5'-ACTAGT-'3') and prevents the initiation of transcription. The complex also regulates trp repressor biosynthesis by binding to its regulatory region.</text>
</comment>
<comment type="subunit">
    <text evidence="1">Homodimer.</text>
</comment>
<comment type="subcellular location">
    <subcellularLocation>
        <location evidence="1">Cytoplasm</location>
    </subcellularLocation>
</comment>
<comment type="similarity">
    <text evidence="1">Belongs to the TrpR family.</text>
</comment>
<proteinExistence type="inferred from homology"/>
<feature type="chain" id="PRO_1000014038" description="Trp operon repressor">
    <location>
        <begin position="1"/>
        <end position="108"/>
    </location>
</feature>
<feature type="DNA-binding region" evidence="1">
    <location>
        <begin position="68"/>
        <end position="91"/>
    </location>
</feature>
<name>TRPR_ECOK1</name>
<evidence type="ECO:0000255" key="1">
    <source>
        <dbReference type="HAMAP-Rule" id="MF_00475"/>
    </source>
</evidence>
<keyword id="KW-0963">Cytoplasm</keyword>
<keyword id="KW-0238">DNA-binding</keyword>
<keyword id="KW-1185">Reference proteome</keyword>
<keyword id="KW-0678">Repressor</keyword>
<keyword id="KW-0804">Transcription</keyword>
<keyword id="KW-0805">Transcription regulation</keyword>
<organism>
    <name type="scientific">Escherichia coli O1:K1 / APEC</name>
    <dbReference type="NCBI Taxonomy" id="405955"/>
    <lineage>
        <taxon>Bacteria</taxon>
        <taxon>Pseudomonadati</taxon>
        <taxon>Pseudomonadota</taxon>
        <taxon>Gammaproteobacteria</taxon>
        <taxon>Enterobacterales</taxon>
        <taxon>Enterobacteriaceae</taxon>
        <taxon>Escherichia</taxon>
    </lineage>
</organism>
<protein>
    <recommendedName>
        <fullName evidence="1">Trp operon repressor</fullName>
    </recommendedName>
</protein>
<reference key="1">
    <citation type="journal article" date="2007" name="J. Bacteriol.">
        <title>The genome sequence of avian pathogenic Escherichia coli strain O1:K1:H7 shares strong similarities with human extraintestinal pathogenic E. coli genomes.</title>
        <authorList>
            <person name="Johnson T.J."/>
            <person name="Kariyawasam S."/>
            <person name="Wannemuehler Y."/>
            <person name="Mangiamele P."/>
            <person name="Johnson S.J."/>
            <person name="Doetkott C."/>
            <person name="Skyberg J.A."/>
            <person name="Lynne A.M."/>
            <person name="Johnson J.R."/>
            <person name="Nolan L.K."/>
        </authorList>
    </citation>
    <scope>NUCLEOTIDE SEQUENCE [LARGE SCALE GENOMIC DNA]</scope>
</reference>